<evidence type="ECO:0000255" key="1">
    <source>
        <dbReference type="HAMAP-Rule" id="MF_00060"/>
    </source>
</evidence>
<feature type="chain" id="PRO_0000335296" description="5'-nucleotidase SurE">
    <location>
        <begin position="1"/>
        <end position="263"/>
    </location>
</feature>
<feature type="binding site" evidence="1">
    <location>
        <position position="11"/>
    </location>
    <ligand>
        <name>a divalent metal cation</name>
        <dbReference type="ChEBI" id="CHEBI:60240"/>
    </ligand>
</feature>
<feature type="binding site" evidence="1">
    <location>
        <position position="12"/>
    </location>
    <ligand>
        <name>a divalent metal cation</name>
        <dbReference type="ChEBI" id="CHEBI:60240"/>
    </ligand>
</feature>
<feature type="binding site" evidence="1">
    <location>
        <position position="42"/>
    </location>
    <ligand>
        <name>a divalent metal cation</name>
        <dbReference type="ChEBI" id="CHEBI:60240"/>
    </ligand>
</feature>
<feature type="binding site" evidence="1">
    <location>
        <position position="96"/>
    </location>
    <ligand>
        <name>a divalent metal cation</name>
        <dbReference type="ChEBI" id="CHEBI:60240"/>
    </ligand>
</feature>
<accession>A2SQ45</accession>
<name>SURE_METLZ</name>
<keyword id="KW-0963">Cytoplasm</keyword>
<keyword id="KW-0378">Hydrolase</keyword>
<keyword id="KW-0479">Metal-binding</keyword>
<keyword id="KW-0547">Nucleotide-binding</keyword>
<keyword id="KW-1185">Reference proteome</keyword>
<proteinExistence type="inferred from homology"/>
<dbReference type="EC" id="3.1.3.5" evidence="1"/>
<dbReference type="EMBL" id="CP000559">
    <property type="protein sequence ID" value="ABN06451.1"/>
    <property type="molecule type" value="Genomic_DNA"/>
</dbReference>
<dbReference type="RefSeq" id="WP_011832652.1">
    <property type="nucleotide sequence ID" value="NC_008942.1"/>
</dbReference>
<dbReference type="SMR" id="A2SQ45"/>
<dbReference type="STRING" id="410358.Mlab_0275"/>
<dbReference type="GeneID" id="4795439"/>
<dbReference type="KEGG" id="mla:Mlab_0275"/>
<dbReference type="eggNOG" id="arCOG02303">
    <property type="taxonomic scope" value="Archaea"/>
</dbReference>
<dbReference type="HOGENOM" id="CLU_045192_1_3_2"/>
<dbReference type="OrthoDB" id="26873at2157"/>
<dbReference type="Proteomes" id="UP000000365">
    <property type="component" value="Chromosome"/>
</dbReference>
<dbReference type="GO" id="GO:0005737">
    <property type="term" value="C:cytoplasm"/>
    <property type="evidence" value="ECO:0007669"/>
    <property type="project" value="UniProtKB-SubCell"/>
</dbReference>
<dbReference type="GO" id="GO:0008253">
    <property type="term" value="F:5'-nucleotidase activity"/>
    <property type="evidence" value="ECO:0007669"/>
    <property type="project" value="UniProtKB-UniRule"/>
</dbReference>
<dbReference type="GO" id="GO:0046872">
    <property type="term" value="F:metal ion binding"/>
    <property type="evidence" value="ECO:0007669"/>
    <property type="project" value="UniProtKB-UniRule"/>
</dbReference>
<dbReference type="GO" id="GO:0000166">
    <property type="term" value="F:nucleotide binding"/>
    <property type="evidence" value="ECO:0007669"/>
    <property type="project" value="UniProtKB-KW"/>
</dbReference>
<dbReference type="Gene3D" id="3.40.1210.10">
    <property type="entry name" value="Survival protein SurE-like phosphatase/nucleotidase"/>
    <property type="match status" value="1"/>
</dbReference>
<dbReference type="HAMAP" id="MF_00060">
    <property type="entry name" value="SurE"/>
    <property type="match status" value="1"/>
</dbReference>
<dbReference type="InterPro" id="IPR030048">
    <property type="entry name" value="SurE"/>
</dbReference>
<dbReference type="InterPro" id="IPR002828">
    <property type="entry name" value="SurE-like_Pase/nucleotidase"/>
</dbReference>
<dbReference type="InterPro" id="IPR036523">
    <property type="entry name" value="SurE-like_sf"/>
</dbReference>
<dbReference type="NCBIfam" id="NF001491">
    <property type="entry name" value="PRK00346.2-1"/>
    <property type="match status" value="1"/>
</dbReference>
<dbReference type="NCBIfam" id="TIGR00087">
    <property type="entry name" value="surE"/>
    <property type="match status" value="1"/>
</dbReference>
<dbReference type="PANTHER" id="PTHR30457">
    <property type="entry name" value="5'-NUCLEOTIDASE SURE"/>
    <property type="match status" value="1"/>
</dbReference>
<dbReference type="PANTHER" id="PTHR30457:SF0">
    <property type="entry name" value="PHOSPHATASE, PUTATIVE (AFU_ORTHOLOGUE AFUA_4G01070)-RELATED"/>
    <property type="match status" value="1"/>
</dbReference>
<dbReference type="Pfam" id="PF01975">
    <property type="entry name" value="SurE"/>
    <property type="match status" value="1"/>
</dbReference>
<dbReference type="SUPFAM" id="SSF64167">
    <property type="entry name" value="SurE-like"/>
    <property type="match status" value="1"/>
</dbReference>
<gene>
    <name evidence="1" type="primary">surE</name>
    <name type="ordered locus">Mlab_0275</name>
</gene>
<reference key="1">
    <citation type="journal article" date="2009" name="Stand. Genomic Sci.">
        <title>Complete genome sequence of Methanocorpusculum labreanum type strain Z.</title>
        <authorList>
            <person name="Anderson I.J."/>
            <person name="Sieprawska-Lupa M."/>
            <person name="Goltsman E."/>
            <person name="Lapidus A."/>
            <person name="Copeland A."/>
            <person name="Glavina Del Rio T."/>
            <person name="Tice H."/>
            <person name="Dalin E."/>
            <person name="Barry K."/>
            <person name="Pitluck S."/>
            <person name="Hauser L."/>
            <person name="Land M."/>
            <person name="Lucas S."/>
            <person name="Richardson P."/>
            <person name="Whitman W.B."/>
            <person name="Kyrpides N.C."/>
        </authorList>
    </citation>
    <scope>NUCLEOTIDE SEQUENCE [LARGE SCALE GENOMIC DNA]</scope>
    <source>
        <strain>ATCC 43576 / DSM 4855 / Z</strain>
    </source>
</reference>
<comment type="function">
    <text evidence="1">Nucleotidase that shows phosphatase activity on nucleoside 5'-monophosphates.</text>
</comment>
<comment type="catalytic activity">
    <reaction evidence="1">
        <text>a ribonucleoside 5'-phosphate + H2O = a ribonucleoside + phosphate</text>
        <dbReference type="Rhea" id="RHEA:12484"/>
        <dbReference type="ChEBI" id="CHEBI:15377"/>
        <dbReference type="ChEBI" id="CHEBI:18254"/>
        <dbReference type="ChEBI" id="CHEBI:43474"/>
        <dbReference type="ChEBI" id="CHEBI:58043"/>
        <dbReference type="EC" id="3.1.3.5"/>
    </reaction>
</comment>
<comment type="cofactor">
    <cofactor evidence="1">
        <name>a divalent metal cation</name>
        <dbReference type="ChEBI" id="CHEBI:60240"/>
    </cofactor>
    <text evidence="1">Binds 1 divalent metal cation per subunit.</text>
</comment>
<comment type="subcellular location">
    <subcellularLocation>
        <location evidence="1">Cytoplasm</location>
    </subcellularLocation>
</comment>
<comment type="similarity">
    <text evidence="1">Belongs to the SurE nucleotidase family.</text>
</comment>
<sequence>MPRPKILLTNDDGINSGGLWAAYDAMSLFADVTVVAPATQQSAVGRSISIFEPLRMNEVTMHGTQAYTVEGRPTDALLLGLYGLGLRPDLVVSGINLGENISFESITTSGTVGAAMEAVNQGVPAIAYSLQMNDEGNKFADPRSHTTDFTQSKDVVTKFTRLFLEKGMPPESKLININIPAEKIEGYKVTVLGERLFETSVEKRIDPRGKPYYWINGTPIYIPEEHSDVTALRKNYVSVTPLSMDNTAFKACPELKKMILDID</sequence>
<protein>
    <recommendedName>
        <fullName evidence="1">5'-nucleotidase SurE</fullName>
        <ecNumber evidence="1">3.1.3.5</ecNumber>
    </recommendedName>
    <alternativeName>
        <fullName evidence="1">Nucleoside 5'-monophosphate phosphohydrolase</fullName>
    </alternativeName>
</protein>
<organism>
    <name type="scientific">Methanocorpusculum labreanum (strain ATCC 43576 / DSM 4855 / Z)</name>
    <dbReference type="NCBI Taxonomy" id="410358"/>
    <lineage>
        <taxon>Archaea</taxon>
        <taxon>Methanobacteriati</taxon>
        <taxon>Methanobacteriota</taxon>
        <taxon>Stenosarchaea group</taxon>
        <taxon>Methanomicrobia</taxon>
        <taxon>Methanomicrobiales</taxon>
        <taxon>Methanocorpusculaceae</taxon>
        <taxon>Methanocorpusculum</taxon>
    </lineage>
</organism>